<organism>
    <name type="scientific">Homo sapiens</name>
    <name type="common">Human</name>
    <dbReference type="NCBI Taxonomy" id="9606"/>
    <lineage>
        <taxon>Eukaryota</taxon>
        <taxon>Metazoa</taxon>
        <taxon>Chordata</taxon>
        <taxon>Craniata</taxon>
        <taxon>Vertebrata</taxon>
        <taxon>Euteleostomi</taxon>
        <taxon>Mammalia</taxon>
        <taxon>Eutheria</taxon>
        <taxon>Euarchontoglires</taxon>
        <taxon>Primates</taxon>
        <taxon>Haplorrhini</taxon>
        <taxon>Catarrhini</taxon>
        <taxon>Hominidae</taxon>
        <taxon>Homo</taxon>
    </lineage>
</organism>
<feature type="chain" id="PRO_0000114670" description="Cytoplasmic dynein 1 light intermediate chain 2">
    <location>
        <begin position="1"/>
        <end position="492"/>
    </location>
</feature>
<feature type="region of interest" description="Disordered" evidence="2">
    <location>
        <begin position="187"/>
        <end position="206"/>
    </location>
</feature>
<feature type="region of interest" description="Disordered" evidence="2">
    <location>
        <begin position="371"/>
        <end position="423"/>
    </location>
</feature>
<feature type="region of interest" description="Disordered" evidence="2">
    <location>
        <begin position="437"/>
        <end position="492"/>
    </location>
</feature>
<feature type="compositionally biased region" description="Polar residues" evidence="2">
    <location>
        <begin position="371"/>
        <end position="381"/>
    </location>
</feature>
<feature type="compositionally biased region" description="Low complexity" evidence="2">
    <location>
        <begin position="400"/>
        <end position="412"/>
    </location>
</feature>
<feature type="compositionally biased region" description="Polar residues" evidence="2">
    <location>
        <begin position="452"/>
        <end position="469"/>
    </location>
</feature>
<feature type="compositionally biased region" description="Basic and acidic residues" evidence="2">
    <location>
        <begin position="471"/>
        <end position="480"/>
    </location>
</feature>
<feature type="compositionally biased region" description="Polar residues" evidence="2">
    <location>
        <begin position="482"/>
        <end position="492"/>
    </location>
</feature>
<feature type="binding site" evidence="1">
    <location>
        <begin position="61"/>
        <end position="68"/>
    </location>
    <ligand>
        <name>ATP</name>
        <dbReference type="ChEBI" id="CHEBI:30616"/>
    </ligand>
</feature>
<feature type="modified residue" description="Phosphoserine" evidence="19 20 21 22 23 24">
    <location>
        <position position="194"/>
    </location>
</feature>
<feature type="modified residue" description="Phosphoserine" evidence="20">
    <location>
        <position position="383"/>
    </location>
</feature>
<feature type="modified residue" description="Phosphoserine" evidence="22">
    <location>
        <position position="391"/>
    </location>
</feature>
<feature type="modified residue" description="Omega-N-methylarginine" evidence="25">
    <location>
        <position position="397"/>
    </location>
</feature>
<feature type="modified residue" description="Phosphothreonine" evidence="22">
    <location>
        <position position="441"/>
    </location>
</feature>
<feature type="modified residue" description="Phosphoserine" evidence="20 22">
    <location>
        <position position="443"/>
    </location>
</feature>
<feature type="modified residue" description="Phosphoserine" evidence="18 20 21 22 24">
    <location>
        <position position="446"/>
    </location>
</feature>
<feature type="splice variant" id="VSP_054663" description="In isoform 2." evidence="5">
    <original>DHTRCNVWILDGDLYHKGLLKFAVSAESLPETLVIFVADMSRPWTVMESLQKWASVLREHIDKMKIPPEKMRELERKF</original>
    <variation>V</variation>
    <location>
        <begin position="100"/>
        <end position="177"/>
    </location>
</feature>
<feature type="sequence conflict" description="In Ref. 5; AAH25959." evidence="6" ref="5">
    <original>K</original>
    <variation>N</variation>
    <location>
        <position position="458"/>
    </location>
</feature>
<feature type="helix" evidence="26">
    <location>
        <begin position="39"/>
        <end position="45"/>
    </location>
</feature>
<feature type="strand" evidence="26">
    <location>
        <begin position="55"/>
        <end position="60"/>
    </location>
</feature>
<feature type="helix" evidence="26">
    <location>
        <begin position="67"/>
        <end position="74"/>
    </location>
</feature>
<feature type="strand" evidence="26">
    <location>
        <begin position="83"/>
        <end position="85"/>
    </location>
</feature>
<feature type="strand" evidence="26">
    <location>
        <begin position="89"/>
        <end position="93"/>
    </location>
</feature>
<feature type="strand" evidence="26">
    <location>
        <begin position="96"/>
        <end position="98"/>
    </location>
</feature>
<feature type="strand" evidence="26">
    <location>
        <begin position="102"/>
        <end position="106"/>
    </location>
</feature>
<feature type="helix" evidence="26">
    <location>
        <begin position="116"/>
        <end position="120"/>
    </location>
</feature>
<feature type="turn" evidence="26">
    <location>
        <begin position="125"/>
        <end position="127"/>
    </location>
</feature>
<feature type="strand" evidence="26">
    <location>
        <begin position="128"/>
        <end position="135"/>
    </location>
</feature>
<feature type="strand" evidence="26">
    <location>
        <begin position="139"/>
        <end position="141"/>
    </location>
</feature>
<feature type="helix" evidence="26">
    <location>
        <begin position="142"/>
        <end position="163"/>
    </location>
</feature>
<feature type="strand" evidence="26">
    <location>
        <begin position="164"/>
        <end position="166"/>
    </location>
</feature>
<feature type="helix" evidence="26">
    <location>
        <begin position="169"/>
        <end position="181"/>
    </location>
</feature>
<feature type="strand" evidence="26">
    <location>
        <begin position="184"/>
        <end position="186"/>
    </location>
</feature>
<feature type="strand" evidence="26">
    <location>
        <begin position="225"/>
        <end position="230"/>
    </location>
</feature>
<feature type="helix" evidence="26">
    <location>
        <begin position="237"/>
        <end position="243"/>
    </location>
</feature>
<feature type="helix" evidence="26">
    <location>
        <begin position="248"/>
        <end position="265"/>
    </location>
</feature>
<feature type="helix" evidence="26">
    <location>
        <begin position="280"/>
        <end position="288"/>
    </location>
</feature>
<feature type="strand" evidence="26">
    <location>
        <begin position="303"/>
        <end position="307"/>
    </location>
</feature>
<feature type="helix" evidence="26">
    <location>
        <begin position="319"/>
        <end position="323"/>
    </location>
</feature>
<feature type="strand" evidence="26">
    <location>
        <begin position="326"/>
        <end position="328"/>
    </location>
</feature>
<feature type="helix" evidence="26">
    <location>
        <begin position="336"/>
        <end position="339"/>
    </location>
</feature>
<feature type="helix" evidence="27">
    <location>
        <begin position="359"/>
        <end position="372"/>
    </location>
</feature>
<feature type="helix" evidence="27">
    <location>
        <begin position="427"/>
        <end position="438"/>
    </location>
</feature>
<comment type="function">
    <text evidence="7">Acts as one of several non-catalytic accessory components of the cytoplasmic dynein 1 complex that are thought to be involved in linking dynein to cargos and to adapter proteins that regulate dynein function. Cytoplasmic dynein 1 acts as a motor for the intracellular retrograde motility of vesicles and organelles along microtubules. May play a role in binding dynein to membranous organelles or chromosomes.</text>
</comment>
<comment type="subunit">
    <text evidence="3 4">Homodimer. The cytoplasmic dynein 1 complex consists of two catalytic heavy chains (HCs) and a number of non-catalytic subunits presented by intermediate chains (ICs), light intermediate chains (LICs) and light chains (LCs); the composition seems to vary in respect to the IC, LIC and LC composition. The heavy chain homodimer serves as a scaffold for the probable homodimeric assembly of the respective non-catalytic subunits. The ICs and LICs bind directly to the HC dimer and the LCs assemble on the IC dimer. Interacts with DYNC1H1; DYNC1LI1 and DYNC1LI2 bind mutually exclusive to DYNC1H.</text>
</comment>
<comment type="subcellular location">
    <subcellularLocation>
        <location evidence="7">Cytoplasm</location>
        <location evidence="7">Cytoskeleton</location>
    </subcellularLocation>
</comment>
<comment type="alternative products">
    <event type="alternative splicing"/>
    <isoform>
        <id>O43237-1</id>
        <name>1</name>
        <sequence type="displayed"/>
    </isoform>
    <isoform>
        <id>O43237-2</id>
        <name>2</name>
        <sequence type="described" ref="VSP_054663"/>
    </isoform>
</comment>
<comment type="similarity">
    <text evidence="6">Belongs to the dynein light intermediate chain family.</text>
</comment>
<evidence type="ECO:0000255" key="1"/>
<evidence type="ECO:0000256" key="2">
    <source>
        <dbReference type="SAM" id="MobiDB-lite"/>
    </source>
</evidence>
<evidence type="ECO:0000269" key="3">
    <source>
    </source>
</evidence>
<evidence type="ECO:0000269" key="4">
    <source>
    </source>
</evidence>
<evidence type="ECO:0000303" key="5">
    <source>
    </source>
</evidence>
<evidence type="ECO:0000305" key="6"/>
<evidence type="ECO:0000305" key="7">
    <source>
    </source>
</evidence>
<evidence type="ECO:0000312" key="8">
    <source>
        <dbReference type="HGNC" id="HGNC:2966"/>
    </source>
</evidence>
<evidence type="ECO:0007744" key="9">
    <source>
        <dbReference type="PDB" id="6F1T"/>
    </source>
</evidence>
<evidence type="ECO:0007744" key="10">
    <source>
        <dbReference type="PDB" id="6F1Y"/>
    </source>
</evidence>
<evidence type="ECO:0007744" key="11">
    <source>
        <dbReference type="PDB" id="6F38"/>
    </source>
</evidence>
<evidence type="ECO:0007744" key="12">
    <source>
        <dbReference type="PDB" id="6F3A"/>
    </source>
</evidence>
<evidence type="ECO:0007744" key="13">
    <source>
        <dbReference type="PDB" id="7Z8F"/>
    </source>
</evidence>
<evidence type="ECO:0007744" key="14">
    <source>
        <dbReference type="PDB" id="7Z8I"/>
    </source>
</evidence>
<evidence type="ECO:0007744" key="15">
    <source>
        <dbReference type="PDB" id="7Z8J"/>
    </source>
</evidence>
<evidence type="ECO:0007744" key="16">
    <source>
        <dbReference type="PDB" id="7Z8K"/>
    </source>
</evidence>
<evidence type="ECO:0007744" key="17">
    <source>
        <dbReference type="PDB" id="7Z8L"/>
    </source>
</evidence>
<evidence type="ECO:0007744" key="18">
    <source>
    </source>
</evidence>
<evidence type="ECO:0007744" key="19">
    <source>
    </source>
</evidence>
<evidence type="ECO:0007744" key="20">
    <source>
    </source>
</evidence>
<evidence type="ECO:0007744" key="21">
    <source>
    </source>
</evidence>
<evidence type="ECO:0007744" key="22">
    <source>
    </source>
</evidence>
<evidence type="ECO:0007744" key="23">
    <source>
    </source>
</evidence>
<evidence type="ECO:0007744" key="24">
    <source>
    </source>
</evidence>
<evidence type="ECO:0007744" key="25">
    <source>
    </source>
</evidence>
<evidence type="ECO:0007829" key="26">
    <source>
        <dbReference type="PDB" id="6F1Y"/>
    </source>
</evidence>
<evidence type="ECO:0007829" key="27">
    <source>
        <dbReference type="PDB" id="7Z8I"/>
    </source>
</evidence>
<dbReference type="EMBL" id="AF035812">
    <property type="protein sequence ID" value="AAB88513.1"/>
    <property type="molecule type" value="mRNA"/>
</dbReference>
<dbReference type="EMBL" id="AK291766">
    <property type="protein sequence ID" value="BAF84455.1"/>
    <property type="molecule type" value="mRNA"/>
</dbReference>
<dbReference type="EMBL" id="AK303031">
    <property type="protein sequence ID" value="BAG64156.1"/>
    <property type="molecule type" value="mRNA"/>
</dbReference>
<dbReference type="EMBL" id="AC018557">
    <property type="status" value="NOT_ANNOTATED_CDS"/>
    <property type="molecule type" value="Genomic_DNA"/>
</dbReference>
<dbReference type="EMBL" id="AC044802">
    <property type="status" value="NOT_ANNOTATED_CDS"/>
    <property type="molecule type" value="Genomic_DNA"/>
</dbReference>
<dbReference type="EMBL" id="CH471092">
    <property type="protein sequence ID" value="EAW83039.1"/>
    <property type="molecule type" value="Genomic_DNA"/>
</dbReference>
<dbReference type="EMBL" id="BC025959">
    <property type="protein sequence ID" value="AAH25959.1"/>
    <property type="molecule type" value="mRNA"/>
</dbReference>
<dbReference type="CCDS" id="CCDS10818.1">
    <molecule id="O43237-1"/>
</dbReference>
<dbReference type="CCDS" id="CCDS67049.1">
    <molecule id="O43237-2"/>
</dbReference>
<dbReference type="RefSeq" id="NP_001273086.1">
    <molecule id="O43237-2"/>
    <property type="nucleotide sequence ID" value="NM_001286157.2"/>
</dbReference>
<dbReference type="RefSeq" id="NP_006132.1">
    <molecule id="O43237-1"/>
    <property type="nucleotide sequence ID" value="NM_006141.3"/>
</dbReference>
<dbReference type="PDB" id="6F1T">
    <property type="method" value="EM"/>
    <property type="resolution" value="3.50 A"/>
    <property type="chains" value="i/j/q/r=1-492"/>
</dbReference>
<dbReference type="PDB" id="6F1Y">
    <property type="method" value="EM"/>
    <property type="resolution" value="3.40 A"/>
    <property type="chains" value="j=37-373"/>
</dbReference>
<dbReference type="PDB" id="6F38">
    <property type="method" value="EM"/>
    <property type="resolution" value="6.70 A"/>
    <property type="chains" value="i/j/q/r=1-492"/>
</dbReference>
<dbReference type="PDB" id="6F3A">
    <property type="method" value="EM"/>
    <property type="resolution" value="8.20 A"/>
    <property type="chains" value="j=1-492"/>
</dbReference>
<dbReference type="PDB" id="7Z8F">
    <property type="method" value="EM"/>
    <property type="resolution" value="20.00 A"/>
    <property type="chains" value="i/j/q/r=1-492"/>
</dbReference>
<dbReference type="PDB" id="7Z8I">
    <property type="method" value="EM"/>
    <property type="resolution" value="3.30 A"/>
    <property type="chains" value="j/r=1-492"/>
</dbReference>
<dbReference type="PDB" id="7Z8J">
    <property type="method" value="EM"/>
    <property type="resolution" value="3.93 A"/>
    <property type="chains" value="j/r=1-492"/>
</dbReference>
<dbReference type="PDB" id="7Z8K">
    <property type="method" value="EM"/>
    <property type="resolution" value="4.37 A"/>
    <property type="chains" value="i=1-492"/>
</dbReference>
<dbReference type="PDB" id="7Z8L">
    <property type="method" value="EM"/>
    <property type="resolution" value="4.90 A"/>
    <property type="chains" value="q=1-492"/>
</dbReference>
<dbReference type="PDB" id="8PR0">
    <property type="method" value="EM"/>
    <property type="resolution" value="9.40 A"/>
    <property type="chains" value="K=1-492"/>
</dbReference>
<dbReference type="PDB" id="8PR1">
    <property type="method" value="EM"/>
    <property type="resolution" value="8.20 A"/>
    <property type="chains" value="F/H=1-492"/>
</dbReference>
<dbReference type="PDB" id="8PR2">
    <property type="method" value="EM"/>
    <property type="resolution" value="3.80 A"/>
    <property type="chains" value="j=1-492"/>
</dbReference>
<dbReference type="PDB" id="8PR3">
    <property type="method" value="EM"/>
    <property type="resolution" value="3.90 A"/>
    <property type="chains" value="E/F/j=1-492"/>
</dbReference>
<dbReference type="PDB" id="8PTK">
    <property type="method" value="EM"/>
    <property type="resolution" value="10.00 A"/>
    <property type="chains" value="j/q/r/u=1-492"/>
</dbReference>
<dbReference type="PDBsum" id="6F1T"/>
<dbReference type="PDBsum" id="6F1Y"/>
<dbReference type="PDBsum" id="6F38"/>
<dbReference type="PDBsum" id="6F3A"/>
<dbReference type="PDBsum" id="7Z8F"/>
<dbReference type="PDBsum" id="7Z8I"/>
<dbReference type="PDBsum" id="7Z8J"/>
<dbReference type="PDBsum" id="7Z8K"/>
<dbReference type="PDBsum" id="7Z8L"/>
<dbReference type="PDBsum" id="8PR0"/>
<dbReference type="PDBsum" id="8PR1"/>
<dbReference type="PDBsum" id="8PR2"/>
<dbReference type="PDBsum" id="8PR3"/>
<dbReference type="PDBsum" id="8PTK"/>
<dbReference type="EMDB" id="EMD-14549"/>
<dbReference type="EMDB" id="EMD-14552"/>
<dbReference type="EMDB" id="EMD-14553"/>
<dbReference type="EMDB" id="EMD-14555"/>
<dbReference type="EMDB" id="EMD-14556"/>
<dbReference type="EMDB" id="EMD-17830"/>
<dbReference type="EMDB" id="EMD-17831"/>
<dbReference type="EMDB" id="EMD-17832"/>
<dbReference type="EMDB" id="EMD-17833"/>
<dbReference type="EMDB" id="EMD-17873"/>
<dbReference type="EMDB" id="EMD-4168"/>
<dbReference type="EMDB" id="EMD-4171"/>
<dbReference type="EMDB" id="EMD-4177"/>
<dbReference type="SMR" id="O43237"/>
<dbReference type="BioGRID" id="108120">
    <property type="interactions" value="163"/>
</dbReference>
<dbReference type="ComplexPortal" id="CPX-5025">
    <property type="entry name" value="Cytoplasmic dynein complex, variant 1"/>
</dbReference>
<dbReference type="FunCoup" id="O43237">
    <property type="interactions" value="2616"/>
</dbReference>
<dbReference type="IntAct" id="O43237">
    <property type="interactions" value="51"/>
</dbReference>
<dbReference type="MINT" id="O43237"/>
<dbReference type="STRING" id="9606.ENSP00000258198"/>
<dbReference type="GlyGen" id="O43237">
    <property type="glycosylation" value="1 site, 1 O-linked glycan (1 site)"/>
</dbReference>
<dbReference type="iPTMnet" id="O43237"/>
<dbReference type="MetOSite" id="O43237"/>
<dbReference type="PhosphoSitePlus" id="O43237"/>
<dbReference type="BioMuta" id="DYNC1LI2"/>
<dbReference type="jPOST" id="O43237"/>
<dbReference type="MassIVE" id="O43237"/>
<dbReference type="PaxDb" id="9606-ENSP00000258198"/>
<dbReference type="PeptideAtlas" id="O43237"/>
<dbReference type="ProteomicsDB" id="48820">
    <molecule id="O43237-1"/>
</dbReference>
<dbReference type="ProteomicsDB" id="5614"/>
<dbReference type="Pumba" id="O43237"/>
<dbReference type="Antibodypedia" id="29288">
    <property type="antibodies" value="120 antibodies from 24 providers"/>
</dbReference>
<dbReference type="DNASU" id="1783"/>
<dbReference type="Ensembl" id="ENST00000258198.7">
    <molecule id="O43237-1"/>
    <property type="protein sequence ID" value="ENSP00000258198.2"/>
    <property type="gene ID" value="ENSG00000135720.13"/>
</dbReference>
<dbReference type="Ensembl" id="ENST00000443351.6">
    <molecule id="O43237-2"/>
    <property type="protein sequence ID" value="ENSP00000394289.2"/>
    <property type="gene ID" value="ENSG00000135720.13"/>
</dbReference>
<dbReference type="GeneID" id="1783"/>
<dbReference type="KEGG" id="hsa:1783"/>
<dbReference type="MANE-Select" id="ENST00000258198.7">
    <property type="protein sequence ID" value="ENSP00000258198.2"/>
    <property type="RefSeq nucleotide sequence ID" value="NM_006141.3"/>
    <property type="RefSeq protein sequence ID" value="NP_006132.1"/>
</dbReference>
<dbReference type="UCSC" id="uc002eqb.2">
    <molecule id="O43237-1"/>
    <property type="organism name" value="human"/>
</dbReference>
<dbReference type="AGR" id="HGNC:2966"/>
<dbReference type="CTD" id="1783"/>
<dbReference type="DisGeNET" id="1783"/>
<dbReference type="GeneCards" id="DYNC1LI2"/>
<dbReference type="HGNC" id="HGNC:2966">
    <property type="gene designation" value="DYNC1LI2"/>
</dbReference>
<dbReference type="HPA" id="ENSG00000135720">
    <property type="expression patterns" value="Tissue enhanced (brain)"/>
</dbReference>
<dbReference type="MIM" id="611406">
    <property type="type" value="gene"/>
</dbReference>
<dbReference type="neXtProt" id="NX_O43237"/>
<dbReference type="OpenTargets" id="ENSG00000135720"/>
<dbReference type="PharmGKB" id="PA27438"/>
<dbReference type="VEuPathDB" id="HostDB:ENSG00000135720"/>
<dbReference type="eggNOG" id="KOG3905">
    <property type="taxonomic scope" value="Eukaryota"/>
</dbReference>
<dbReference type="GeneTree" id="ENSGT00390000008295"/>
<dbReference type="HOGENOM" id="CLU_021937_2_1_1"/>
<dbReference type="InParanoid" id="O43237"/>
<dbReference type="OMA" id="FKHNVID"/>
<dbReference type="OrthoDB" id="27603at2759"/>
<dbReference type="PAN-GO" id="O43237">
    <property type="GO annotations" value="4 GO annotations based on evolutionary models"/>
</dbReference>
<dbReference type="PhylomeDB" id="O43237"/>
<dbReference type="TreeFam" id="TF352602"/>
<dbReference type="PathwayCommons" id="O43237"/>
<dbReference type="Reactome" id="R-HSA-141444">
    <property type="pathway name" value="Amplification of signal from unattached kinetochores via a MAD2 inhibitory signal"/>
</dbReference>
<dbReference type="Reactome" id="R-HSA-2132295">
    <property type="pathway name" value="MHC class II antigen presentation"/>
</dbReference>
<dbReference type="Reactome" id="R-HSA-2467813">
    <property type="pathway name" value="Separation of Sister Chromatids"/>
</dbReference>
<dbReference type="Reactome" id="R-HSA-2500257">
    <property type="pathway name" value="Resolution of Sister Chromatid Cohesion"/>
</dbReference>
<dbReference type="Reactome" id="R-HSA-3371497">
    <property type="pathway name" value="HSP90 chaperone cycle for steroid hormone receptors (SHR) in the presence of ligand"/>
</dbReference>
<dbReference type="Reactome" id="R-HSA-5663220">
    <property type="pathway name" value="RHO GTPases Activate Formins"/>
</dbReference>
<dbReference type="Reactome" id="R-HSA-6807878">
    <property type="pathway name" value="COPI-mediated anterograde transport"/>
</dbReference>
<dbReference type="Reactome" id="R-HSA-6811436">
    <property type="pathway name" value="COPI-independent Golgi-to-ER retrograde traffic"/>
</dbReference>
<dbReference type="Reactome" id="R-HSA-68877">
    <property type="pathway name" value="Mitotic Prometaphase"/>
</dbReference>
<dbReference type="Reactome" id="R-HSA-9609690">
    <property type="pathway name" value="HCMV Early Events"/>
</dbReference>
<dbReference type="Reactome" id="R-HSA-9646399">
    <property type="pathway name" value="Aggrephagy"/>
</dbReference>
<dbReference type="Reactome" id="R-HSA-9648025">
    <property type="pathway name" value="EML4 and NUDC in mitotic spindle formation"/>
</dbReference>
<dbReference type="SignaLink" id="O43237"/>
<dbReference type="BioGRID-ORCS" id="1783">
    <property type="hits" value="53 hits in 1152 CRISPR screens"/>
</dbReference>
<dbReference type="CD-CODE" id="8C2F96ED">
    <property type="entry name" value="Centrosome"/>
</dbReference>
<dbReference type="CD-CODE" id="FB4E32DD">
    <property type="entry name" value="Presynaptic clusters and postsynaptic densities"/>
</dbReference>
<dbReference type="ChiTaRS" id="DYNC1LI2">
    <property type="organism name" value="human"/>
</dbReference>
<dbReference type="GeneWiki" id="DYNC1LI2"/>
<dbReference type="GenomeRNAi" id="1783"/>
<dbReference type="Pharos" id="O43237">
    <property type="development level" value="Tbio"/>
</dbReference>
<dbReference type="PRO" id="PR:O43237"/>
<dbReference type="Proteomes" id="UP000005640">
    <property type="component" value="Chromosome 16"/>
</dbReference>
<dbReference type="RNAct" id="O43237">
    <property type="molecule type" value="protein"/>
</dbReference>
<dbReference type="Bgee" id="ENSG00000135720">
    <property type="expression patterns" value="Expressed in endothelial cell and 213 other cell types or tissues"/>
</dbReference>
<dbReference type="ExpressionAtlas" id="O43237">
    <property type="expression patterns" value="baseline and differential"/>
</dbReference>
<dbReference type="GO" id="GO:0005813">
    <property type="term" value="C:centrosome"/>
    <property type="evidence" value="ECO:0000314"/>
    <property type="project" value="UniProtKB"/>
</dbReference>
<dbReference type="GO" id="GO:0005868">
    <property type="term" value="C:cytoplasmic dynein complex"/>
    <property type="evidence" value="ECO:0000318"/>
    <property type="project" value="GO_Central"/>
</dbReference>
<dbReference type="GO" id="GO:0005829">
    <property type="term" value="C:cytosol"/>
    <property type="evidence" value="ECO:0000304"/>
    <property type="project" value="Reactome"/>
</dbReference>
<dbReference type="GO" id="GO:0030286">
    <property type="term" value="C:dynein complex"/>
    <property type="evidence" value="ECO:0000353"/>
    <property type="project" value="ComplexPortal"/>
</dbReference>
<dbReference type="GO" id="GO:0000776">
    <property type="term" value="C:kinetochore"/>
    <property type="evidence" value="ECO:0007669"/>
    <property type="project" value="Ensembl"/>
</dbReference>
<dbReference type="GO" id="GO:0005770">
    <property type="term" value="C:late endosome"/>
    <property type="evidence" value="ECO:0007669"/>
    <property type="project" value="Ensembl"/>
</dbReference>
<dbReference type="GO" id="GO:0016020">
    <property type="term" value="C:membrane"/>
    <property type="evidence" value="ECO:0007005"/>
    <property type="project" value="UniProtKB"/>
</dbReference>
<dbReference type="GO" id="GO:0005874">
    <property type="term" value="C:microtubule"/>
    <property type="evidence" value="ECO:0007669"/>
    <property type="project" value="UniProtKB-KW"/>
</dbReference>
<dbReference type="GO" id="GO:0005524">
    <property type="term" value="F:ATP binding"/>
    <property type="evidence" value="ECO:0007669"/>
    <property type="project" value="UniProtKB-KW"/>
</dbReference>
<dbReference type="GO" id="GO:0045504">
    <property type="term" value="F:dynein heavy chain binding"/>
    <property type="evidence" value="ECO:0000318"/>
    <property type="project" value="GO_Central"/>
</dbReference>
<dbReference type="GO" id="GO:0042802">
    <property type="term" value="F:identical protein binding"/>
    <property type="evidence" value="ECO:0007669"/>
    <property type="project" value="Ensembl"/>
</dbReference>
<dbReference type="GO" id="GO:1990090">
    <property type="term" value="P:cellular response to nerve growth factor stimulus"/>
    <property type="evidence" value="ECO:0007669"/>
    <property type="project" value="Ensembl"/>
</dbReference>
<dbReference type="GO" id="GO:0051642">
    <property type="term" value="P:centrosome localization"/>
    <property type="evidence" value="ECO:0007669"/>
    <property type="project" value="Ensembl"/>
</dbReference>
<dbReference type="GO" id="GO:0000226">
    <property type="term" value="P:microtubule cytoskeleton organization"/>
    <property type="evidence" value="ECO:0000318"/>
    <property type="project" value="GO_Central"/>
</dbReference>
<dbReference type="GO" id="GO:0007018">
    <property type="term" value="P:microtubule-based movement"/>
    <property type="evidence" value="ECO:0000318"/>
    <property type="project" value="GO_Central"/>
</dbReference>
<dbReference type="Gene3D" id="3.40.50.300">
    <property type="entry name" value="P-loop containing nucleotide triphosphate hydrolases"/>
    <property type="match status" value="1"/>
</dbReference>
<dbReference type="InterPro" id="IPR008467">
    <property type="entry name" value="Dynein1_light_intermed_chain"/>
</dbReference>
<dbReference type="InterPro" id="IPR022780">
    <property type="entry name" value="Dynein_light_int_chain"/>
</dbReference>
<dbReference type="InterPro" id="IPR027417">
    <property type="entry name" value="P-loop_NTPase"/>
</dbReference>
<dbReference type="PANTHER" id="PTHR12688:SF1">
    <property type="entry name" value="CYTOPLASMIC DYNEIN 1 LIGHT INTERMEDIATE CHAIN 2"/>
    <property type="match status" value="1"/>
</dbReference>
<dbReference type="PANTHER" id="PTHR12688">
    <property type="entry name" value="DYNEIN LIGHT INTERMEDIATE CHAIN"/>
    <property type="match status" value="1"/>
</dbReference>
<dbReference type="Pfam" id="PF05783">
    <property type="entry name" value="DLIC"/>
    <property type="match status" value="1"/>
</dbReference>
<dbReference type="SUPFAM" id="SSF52540">
    <property type="entry name" value="P-loop containing nucleoside triphosphate hydrolases"/>
    <property type="match status" value="1"/>
</dbReference>
<proteinExistence type="evidence at protein level"/>
<name>DC1L2_HUMAN</name>
<sequence length="492" mass="54099">MAPVGVEKKLLLGPNGPAVAAAGDLTSEEEEGQSLWSSILSEVSTRARSKLPSGKNILVFGEDGSGKTTLMTKLQGAEHGKKGRGLEYLYLSVHDEDRDDHTRCNVWILDGDLYHKGLLKFAVSAESLPETLVIFVADMSRPWTVMESLQKWASVLREHIDKMKIPPEKMRELERKFVKDFQDYMEPEEGCQGSPQRRGPLTSGSDEENVALPLGDNVLTHNLGIPVLVVCTKCDAVSVLEKEHDYRDEHLDFIQSHLRRFCLQYGAALIYTSVKEEKNLDLLYKYIVHKTYGFHFTTPALVVEKDAVFIPAGWDNEKKIAILHENFTTVKPEDAYEDFIVKPPVRKLVHDKELAAEDEQVFLMKQQSLLAKQPATPTRASESPARGPSGSPRTQGRGGPASVPSSSPGTSVKKPDPNIKNNAASEGVLASFFNSLLSKKTGSPGSPGAGGVQSTAKKSGQKTVLSNVQEELDRMTRKPDSMVTNSSTENEA</sequence>
<accession>O43237</accession>
<accession>A8K6V1</accession>
<accession>B4DZP4</accession>
<accession>Q8TAT3</accession>
<protein>
    <recommendedName>
        <fullName>Cytoplasmic dynein 1 light intermediate chain 2</fullName>
    </recommendedName>
    <alternativeName>
        <fullName>Dynein light intermediate chain 2, cytosolic</fullName>
        <shortName>LIC-2</shortName>
    </alternativeName>
    <alternativeName>
        <fullName>LIC53/55</fullName>
    </alternativeName>
</protein>
<reference key="1">
    <citation type="submission" date="1997-11" db="EMBL/GenBank/DDBJ databases">
        <authorList>
            <person name="Zha D."/>
            <person name="Hu G."/>
        </authorList>
    </citation>
    <scope>NUCLEOTIDE SEQUENCE [MRNA] (ISOFORM 1)</scope>
</reference>
<reference key="2">
    <citation type="journal article" date="2004" name="Nat. Genet.">
        <title>Complete sequencing and characterization of 21,243 full-length human cDNAs.</title>
        <authorList>
            <person name="Ota T."/>
            <person name="Suzuki Y."/>
            <person name="Nishikawa T."/>
            <person name="Otsuki T."/>
            <person name="Sugiyama T."/>
            <person name="Irie R."/>
            <person name="Wakamatsu A."/>
            <person name="Hayashi K."/>
            <person name="Sato H."/>
            <person name="Nagai K."/>
            <person name="Kimura K."/>
            <person name="Makita H."/>
            <person name="Sekine M."/>
            <person name="Obayashi M."/>
            <person name="Nishi T."/>
            <person name="Shibahara T."/>
            <person name="Tanaka T."/>
            <person name="Ishii S."/>
            <person name="Yamamoto J."/>
            <person name="Saito K."/>
            <person name="Kawai Y."/>
            <person name="Isono Y."/>
            <person name="Nakamura Y."/>
            <person name="Nagahari K."/>
            <person name="Murakami K."/>
            <person name="Yasuda T."/>
            <person name="Iwayanagi T."/>
            <person name="Wagatsuma M."/>
            <person name="Shiratori A."/>
            <person name="Sudo H."/>
            <person name="Hosoiri T."/>
            <person name="Kaku Y."/>
            <person name="Kodaira H."/>
            <person name="Kondo H."/>
            <person name="Sugawara M."/>
            <person name="Takahashi M."/>
            <person name="Kanda K."/>
            <person name="Yokoi T."/>
            <person name="Furuya T."/>
            <person name="Kikkawa E."/>
            <person name="Omura Y."/>
            <person name="Abe K."/>
            <person name="Kamihara K."/>
            <person name="Katsuta N."/>
            <person name="Sato K."/>
            <person name="Tanikawa M."/>
            <person name="Yamazaki M."/>
            <person name="Ninomiya K."/>
            <person name="Ishibashi T."/>
            <person name="Yamashita H."/>
            <person name="Murakawa K."/>
            <person name="Fujimori K."/>
            <person name="Tanai H."/>
            <person name="Kimata M."/>
            <person name="Watanabe M."/>
            <person name="Hiraoka S."/>
            <person name="Chiba Y."/>
            <person name="Ishida S."/>
            <person name="Ono Y."/>
            <person name="Takiguchi S."/>
            <person name="Watanabe S."/>
            <person name="Yosida M."/>
            <person name="Hotuta T."/>
            <person name="Kusano J."/>
            <person name="Kanehori K."/>
            <person name="Takahashi-Fujii A."/>
            <person name="Hara H."/>
            <person name="Tanase T.-O."/>
            <person name="Nomura Y."/>
            <person name="Togiya S."/>
            <person name="Komai F."/>
            <person name="Hara R."/>
            <person name="Takeuchi K."/>
            <person name="Arita M."/>
            <person name="Imose N."/>
            <person name="Musashino K."/>
            <person name="Yuuki H."/>
            <person name="Oshima A."/>
            <person name="Sasaki N."/>
            <person name="Aotsuka S."/>
            <person name="Yoshikawa Y."/>
            <person name="Matsunawa H."/>
            <person name="Ichihara T."/>
            <person name="Shiohata N."/>
            <person name="Sano S."/>
            <person name="Moriya S."/>
            <person name="Momiyama H."/>
            <person name="Satoh N."/>
            <person name="Takami S."/>
            <person name="Terashima Y."/>
            <person name="Suzuki O."/>
            <person name="Nakagawa S."/>
            <person name="Senoh A."/>
            <person name="Mizoguchi H."/>
            <person name="Goto Y."/>
            <person name="Shimizu F."/>
            <person name="Wakebe H."/>
            <person name="Hishigaki H."/>
            <person name="Watanabe T."/>
            <person name="Sugiyama A."/>
            <person name="Takemoto M."/>
            <person name="Kawakami B."/>
            <person name="Yamazaki M."/>
            <person name="Watanabe K."/>
            <person name="Kumagai A."/>
            <person name="Itakura S."/>
            <person name="Fukuzumi Y."/>
            <person name="Fujimori Y."/>
            <person name="Komiyama M."/>
            <person name="Tashiro H."/>
            <person name="Tanigami A."/>
            <person name="Fujiwara T."/>
            <person name="Ono T."/>
            <person name="Yamada K."/>
            <person name="Fujii Y."/>
            <person name="Ozaki K."/>
            <person name="Hirao M."/>
            <person name="Ohmori Y."/>
            <person name="Kawabata A."/>
            <person name="Hikiji T."/>
            <person name="Kobatake N."/>
            <person name="Inagaki H."/>
            <person name="Ikema Y."/>
            <person name="Okamoto S."/>
            <person name="Okitani R."/>
            <person name="Kawakami T."/>
            <person name="Noguchi S."/>
            <person name="Itoh T."/>
            <person name="Shigeta K."/>
            <person name="Senba T."/>
            <person name="Matsumura K."/>
            <person name="Nakajima Y."/>
            <person name="Mizuno T."/>
            <person name="Morinaga M."/>
            <person name="Sasaki M."/>
            <person name="Togashi T."/>
            <person name="Oyama M."/>
            <person name="Hata H."/>
            <person name="Watanabe M."/>
            <person name="Komatsu T."/>
            <person name="Mizushima-Sugano J."/>
            <person name="Satoh T."/>
            <person name="Shirai Y."/>
            <person name="Takahashi Y."/>
            <person name="Nakagawa K."/>
            <person name="Okumura K."/>
            <person name="Nagase T."/>
            <person name="Nomura N."/>
            <person name="Kikuchi H."/>
            <person name="Masuho Y."/>
            <person name="Yamashita R."/>
            <person name="Nakai K."/>
            <person name="Yada T."/>
            <person name="Nakamura Y."/>
            <person name="Ohara O."/>
            <person name="Isogai T."/>
            <person name="Sugano S."/>
        </authorList>
    </citation>
    <scope>NUCLEOTIDE SEQUENCE [LARGE SCALE MRNA] (ISOFORMS 1 AND 2)</scope>
    <source>
        <tissue>Placenta</tissue>
        <tissue>Testis</tissue>
    </source>
</reference>
<reference key="3">
    <citation type="journal article" date="2004" name="Nature">
        <title>The sequence and analysis of duplication-rich human chromosome 16.</title>
        <authorList>
            <person name="Martin J."/>
            <person name="Han C."/>
            <person name="Gordon L.A."/>
            <person name="Terry A."/>
            <person name="Prabhakar S."/>
            <person name="She X."/>
            <person name="Xie G."/>
            <person name="Hellsten U."/>
            <person name="Chan Y.M."/>
            <person name="Altherr M."/>
            <person name="Couronne O."/>
            <person name="Aerts A."/>
            <person name="Bajorek E."/>
            <person name="Black S."/>
            <person name="Blumer H."/>
            <person name="Branscomb E."/>
            <person name="Brown N.C."/>
            <person name="Bruno W.J."/>
            <person name="Buckingham J.M."/>
            <person name="Callen D.F."/>
            <person name="Campbell C.S."/>
            <person name="Campbell M.L."/>
            <person name="Campbell E.W."/>
            <person name="Caoile C."/>
            <person name="Challacombe J.F."/>
            <person name="Chasteen L.A."/>
            <person name="Chertkov O."/>
            <person name="Chi H.C."/>
            <person name="Christensen M."/>
            <person name="Clark L.M."/>
            <person name="Cohn J.D."/>
            <person name="Denys M."/>
            <person name="Detter J.C."/>
            <person name="Dickson M."/>
            <person name="Dimitrijevic-Bussod M."/>
            <person name="Escobar J."/>
            <person name="Fawcett J.J."/>
            <person name="Flowers D."/>
            <person name="Fotopulos D."/>
            <person name="Glavina T."/>
            <person name="Gomez M."/>
            <person name="Gonzales E."/>
            <person name="Goodstein D."/>
            <person name="Goodwin L.A."/>
            <person name="Grady D.L."/>
            <person name="Grigoriev I."/>
            <person name="Groza M."/>
            <person name="Hammon N."/>
            <person name="Hawkins T."/>
            <person name="Haydu L."/>
            <person name="Hildebrand C.E."/>
            <person name="Huang W."/>
            <person name="Israni S."/>
            <person name="Jett J."/>
            <person name="Jewett P.B."/>
            <person name="Kadner K."/>
            <person name="Kimball H."/>
            <person name="Kobayashi A."/>
            <person name="Krawczyk M.-C."/>
            <person name="Leyba T."/>
            <person name="Longmire J.L."/>
            <person name="Lopez F."/>
            <person name="Lou Y."/>
            <person name="Lowry S."/>
            <person name="Ludeman T."/>
            <person name="Manohar C.F."/>
            <person name="Mark G.A."/>
            <person name="McMurray K.L."/>
            <person name="Meincke L.J."/>
            <person name="Morgan J."/>
            <person name="Moyzis R.K."/>
            <person name="Mundt M.O."/>
            <person name="Munk A.C."/>
            <person name="Nandkeshwar R.D."/>
            <person name="Pitluck S."/>
            <person name="Pollard M."/>
            <person name="Predki P."/>
            <person name="Parson-Quintana B."/>
            <person name="Ramirez L."/>
            <person name="Rash S."/>
            <person name="Retterer J."/>
            <person name="Ricke D.O."/>
            <person name="Robinson D.L."/>
            <person name="Rodriguez A."/>
            <person name="Salamov A."/>
            <person name="Saunders E.H."/>
            <person name="Scott D."/>
            <person name="Shough T."/>
            <person name="Stallings R.L."/>
            <person name="Stalvey M."/>
            <person name="Sutherland R.D."/>
            <person name="Tapia R."/>
            <person name="Tesmer J.G."/>
            <person name="Thayer N."/>
            <person name="Thompson L.S."/>
            <person name="Tice H."/>
            <person name="Torney D.C."/>
            <person name="Tran-Gyamfi M."/>
            <person name="Tsai M."/>
            <person name="Ulanovsky L.E."/>
            <person name="Ustaszewska A."/>
            <person name="Vo N."/>
            <person name="White P.S."/>
            <person name="Williams A.L."/>
            <person name="Wills P.L."/>
            <person name="Wu J.-R."/>
            <person name="Wu K."/>
            <person name="Yang J."/>
            <person name="DeJong P."/>
            <person name="Bruce D."/>
            <person name="Doggett N.A."/>
            <person name="Deaven L."/>
            <person name="Schmutz J."/>
            <person name="Grimwood J."/>
            <person name="Richardson P."/>
            <person name="Rokhsar D.S."/>
            <person name="Eichler E.E."/>
            <person name="Gilna P."/>
            <person name="Lucas S.M."/>
            <person name="Myers R.M."/>
            <person name="Rubin E.M."/>
            <person name="Pennacchio L.A."/>
        </authorList>
    </citation>
    <scope>NUCLEOTIDE SEQUENCE [LARGE SCALE GENOMIC DNA]</scope>
</reference>
<reference key="4">
    <citation type="submission" date="2005-07" db="EMBL/GenBank/DDBJ databases">
        <authorList>
            <person name="Mural R.J."/>
            <person name="Istrail S."/>
            <person name="Sutton G.G."/>
            <person name="Florea L."/>
            <person name="Halpern A.L."/>
            <person name="Mobarry C.M."/>
            <person name="Lippert R."/>
            <person name="Walenz B."/>
            <person name="Shatkay H."/>
            <person name="Dew I."/>
            <person name="Miller J.R."/>
            <person name="Flanigan M.J."/>
            <person name="Edwards N.J."/>
            <person name="Bolanos R."/>
            <person name="Fasulo D."/>
            <person name="Halldorsson B.V."/>
            <person name="Hannenhalli S."/>
            <person name="Turner R."/>
            <person name="Yooseph S."/>
            <person name="Lu F."/>
            <person name="Nusskern D.R."/>
            <person name="Shue B.C."/>
            <person name="Zheng X.H."/>
            <person name="Zhong F."/>
            <person name="Delcher A.L."/>
            <person name="Huson D.H."/>
            <person name="Kravitz S.A."/>
            <person name="Mouchard L."/>
            <person name="Reinert K."/>
            <person name="Remington K.A."/>
            <person name="Clark A.G."/>
            <person name="Waterman M.S."/>
            <person name="Eichler E.E."/>
            <person name="Adams M.D."/>
            <person name="Hunkapiller M.W."/>
            <person name="Myers E.W."/>
            <person name="Venter J.C."/>
        </authorList>
    </citation>
    <scope>NUCLEOTIDE SEQUENCE [LARGE SCALE GENOMIC DNA]</scope>
</reference>
<reference key="5">
    <citation type="journal article" date="2004" name="Genome Res.">
        <title>The status, quality, and expansion of the NIH full-length cDNA project: the Mammalian Gene Collection (MGC).</title>
        <authorList>
            <consortium name="The MGC Project Team"/>
        </authorList>
    </citation>
    <scope>NUCLEOTIDE SEQUENCE [LARGE SCALE MRNA] (ISOFORM 1)</scope>
    <source>
        <tissue>Uterus</tissue>
    </source>
</reference>
<reference key="6">
    <citation type="journal article" date="2006" name="Cell">
        <title>Global, in vivo, and site-specific phosphorylation dynamics in signaling networks.</title>
        <authorList>
            <person name="Olsen J.V."/>
            <person name="Blagoev B."/>
            <person name="Gnad F."/>
            <person name="Macek B."/>
            <person name="Kumar C."/>
            <person name="Mortensen P."/>
            <person name="Mann M."/>
        </authorList>
    </citation>
    <scope>PHOSPHORYLATION [LARGE SCALE ANALYSIS] AT SER-194</scope>
    <scope>IDENTIFICATION BY MASS SPECTROMETRY [LARGE SCALE ANALYSIS]</scope>
    <source>
        <tissue>Cervix carcinoma</tissue>
    </source>
</reference>
<reference key="7">
    <citation type="journal article" date="2006" name="Nat. Biotechnol.">
        <title>A probability-based approach for high-throughput protein phosphorylation analysis and site localization.</title>
        <authorList>
            <person name="Beausoleil S.A."/>
            <person name="Villen J."/>
            <person name="Gerber S.A."/>
            <person name="Rush J."/>
            <person name="Gygi S.P."/>
        </authorList>
    </citation>
    <scope>PHOSPHORYLATION [LARGE SCALE ANALYSIS] AT SER-446</scope>
    <scope>IDENTIFICATION BY MASS SPECTROMETRY [LARGE SCALE ANALYSIS]</scope>
    <source>
        <tissue>Cervix carcinoma</tissue>
    </source>
</reference>
<reference key="8">
    <citation type="journal article" date="2008" name="Mol. Cell">
        <title>Kinase-selective enrichment enables quantitative phosphoproteomics of the kinome across the cell cycle.</title>
        <authorList>
            <person name="Daub H."/>
            <person name="Olsen J.V."/>
            <person name="Bairlein M."/>
            <person name="Gnad F."/>
            <person name="Oppermann F.S."/>
            <person name="Korner R."/>
            <person name="Greff Z."/>
            <person name="Keri G."/>
            <person name="Stemmann O."/>
            <person name="Mann M."/>
        </authorList>
    </citation>
    <scope>PHOSPHORYLATION [LARGE SCALE ANALYSIS] AT SER-194 AND SER-446</scope>
    <scope>IDENTIFICATION BY MASS SPECTROMETRY [LARGE SCALE ANALYSIS]</scope>
    <source>
        <tissue>Cervix carcinoma</tissue>
    </source>
</reference>
<reference key="9">
    <citation type="journal article" date="2008" name="Proc. Natl. Acad. Sci. U.S.A.">
        <title>A quantitative atlas of mitotic phosphorylation.</title>
        <authorList>
            <person name="Dephoure N."/>
            <person name="Zhou C."/>
            <person name="Villen J."/>
            <person name="Beausoleil S.A."/>
            <person name="Bakalarski C.E."/>
            <person name="Elledge S.J."/>
            <person name="Gygi S.P."/>
        </authorList>
    </citation>
    <scope>PHOSPHORYLATION [LARGE SCALE ANALYSIS] AT SER-194; SER-383; SER-443 AND SER-446</scope>
    <scope>IDENTIFICATION BY MASS SPECTROMETRY [LARGE SCALE ANALYSIS]</scope>
    <source>
        <tissue>Cervix carcinoma</tissue>
    </source>
</reference>
<reference key="10">
    <citation type="journal article" date="2009" name="Anal. Chem.">
        <title>Lys-N and trypsin cover complementary parts of the phosphoproteome in a refined SCX-based approach.</title>
        <authorList>
            <person name="Gauci S."/>
            <person name="Helbig A.O."/>
            <person name="Slijper M."/>
            <person name="Krijgsveld J."/>
            <person name="Heck A.J."/>
            <person name="Mohammed S."/>
        </authorList>
    </citation>
    <scope>IDENTIFICATION BY MASS SPECTROMETRY [LARGE SCALE ANALYSIS]</scope>
</reference>
<reference key="11">
    <citation type="journal article" date="2010" name="Sci. Signal.">
        <title>Quantitative phosphoproteomics reveals widespread full phosphorylation site occupancy during mitosis.</title>
        <authorList>
            <person name="Olsen J.V."/>
            <person name="Vermeulen M."/>
            <person name="Santamaria A."/>
            <person name="Kumar C."/>
            <person name="Miller M.L."/>
            <person name="Jensen L.J."/>
            <person name="Gnad F."/>
            <person name="Cox J."/>
            <person name="Jensen T.S."/>
            <person name="Nigg E.A."/>
            <person name="Brunak S."/>
            <person name="Mann M."/>
        </authorList>
    </citation>
    <scope>PHOSPHORYLATION [LARGE SCALE ANALYSIS] AT SER-194; SER-391; THR-441; SER-443 AND SER-446</scope>
    <scope>IDENTIFICATION BY MASS SPECTROMETRY [LARGE SCALE ANALYSIS]</scope>
    <source>
        <tissue>Cervix carcinoma</tissue>
    </source>
</reference>
<reference key="12">
    <citation type="journal article" date="2011" name="BMC Syst. Biol.">
        <title>Initial characterization of the human central proteome.</title>
        <authorList>
            <person name="Burkard T.R."/>
            <person name="Planyavsky M."/>
            <person name="Kaupe I."/>
            <person name="Breitwieser F.P."/>
            <person name="Buerckstuemmer T."/>
            <person name="Bennett K.L."/>
            <person name="Superti-Furga G."/>
            <person name="Colinge J."/>
        </authorList>
    </citation>
    <scope>IDENTIFICATION BY MASS SPECTROMETRY [LARGE SCALE ANALYSIS]</scope>
</reference>
<reference key="13">
    <citation type="journal article" date="2011" name="Sci. Signal.">
        <title>System-wide temporal characterization of the proteome and phosphoproteome of human embryonic stem cell differentiation.</title>
        <authorList>
            <person name="Rigbolt K.T."/>
            <person name="Prokhorova T.A."/>
            <person name="Akimov V."/>
            <person name="Henningsen J."/>
            <person name="Johansen P.T."/>
            <person name="Kratchmarova I."/>
            <person name="Kassem M."/>
            <person name="Mann M."/>
            <person name="Olsen J.V."/>
            <person name="Blagoev B."/>
        </authorList>
    </citation>
    <scope>PHOSPHORYLATION [LARGE SCALE ANALYSIS] AT SER-194</scope>
    <scope>IDENTIFICATION BY MASS SPECTROMETRY [LARGE SCALE ANALYSIS]</scope>
</reference>
<reference key="14">
    <citation type="journal article" date="2013" name="J. Proteome Res.">
        <title>Toward a comprehensive characterization of a human cancer cell phosphoproteome.</title>
        <authorList>
            <person name="Zhou H."/>
            <person name="Di Palma S."/>
            <person name="Preisinger C."/>
            <person name="Peng M."/>
            <person name="Polat A.N."/>
            <person name="Heck A.J."/>
            <person name="Mohammed S."/>
        </authorList>
    </citation>
    <scope>PHOSPHORYLATION [LARGE SCALE ANALYSIS] AT SER-194 AND SER-446</scope>
    <scope>IDENTIFICATION BY MASS SPECTROMETRY [LARGE SCALE ANALYSIS]</scope>
    <source>
        <tissue>Cervix carcinoma</tissue>
        <tissue>Erythroleukemia</tissue>
    </source>
</reference>
<reference key="15">
    <citation type="journal article" date="2014" name="J. Proteomics">
        <title>An enzyme assisted RP-RPLC approach for in-depth analysis of human liver phosphoproteome.</title>
        <authorList>
            <person name="Bian Y."/>
            <person name="Song C."/>
            <person name="Cheng K."/>
            <person name="Dong M."/>
            <person name="Wang F."/>
            <person name="Huang J."/>
            <person name="Sun D."/>
            <person name="Wang L."/>
            <person name="Ye M."/>
            <person name="Zou H."/>
        </authorList>
    </citation>
    <scope>IDENTIFICATION BY MASS SPECTROMETRY [LARGE SCALE ANALYSIS]</scope>
    <source>
        <tissue>Liver</tissue>
    </source>
</reference>
<reference key="16">
    <citation type="journal article" date="2014" name="Mol. Cell. Proteomics">
        <title>Immunoaffinity enrichment and mass spectrometry analysis of protein methylation.</title>
        <authorList>
            <person name="Guo A."/>
            <person name="Gu H."/>
            <person name="Zhou J."/>
            <person name="Mulhern D."/>
            <person name="Wang Y."/>
            <person name="Lee K.A."/>
            <person name="Yang V."/>
            <person name="Aguiar M."/>
            <person name="Kornhauser J."/>
            <person name="Jia X."/>
            <person name="Ren J."/>
            <person name="Beausoleil S.A."/>
            <person name="Silva J.C."/>
            <person name="Vemulapalli V."/>
            <person name="Bedford M.T."/>
            <person name="Comb M.J."/>
        </authorList>
    </citation>
    <scope>METHYLATION [LARGE SCALE ANALYSIS] AT ARG-397</scope>
    <scope>IDENTIFICATION BY MASS SPECTROMETRY [LARGE SCALE ANALYSIS]</scope>
    <source>
        <tissue>Colon carcinoma</tissue>
    </source>
</reference>
<reference evidence="9 10 11 12" key="17">
    <citation type="journal article" date="2018" name="Nature">
        <title>Cryo-EM shows how dynactin recruits two dyneins for faster movement.</title>
        <authorList>
            <person name="Urnavicius L."/>
            <person name="Lau C.K."/>
            <person name="Elshenawy M.M."/>
            <person name="Morales-Rios E."/>
            <person name="Motz C."/>
            <person name="Yildiz A."/>
            <person name="Carter A.P."/>
        </authorList>
    </citation>
    <scope>STRUCTURE BY ELECTRON MICROSCOPY (3.40 ANGSTROMS) OF 37-373</scope>
    <scope>SUBUNIT</scope>
</reference>
<reference evidence="13 14 15 16 17" key="18">
    <citation type="journal article" date="2022" name="Nature">
        <title>Structure of dynein-dynactin on microtubules shows tandem adaptor binding.</title>
        <authorList>
            <person name="Chaaban S."/>
            <person name="Carter A.P."/>
        </authorList>
    </citation>
    <scope>STRUCTURE BY ELECTRON MICROSCOPY (3.30 ANGSTROMS)</scope>
</reference>
<gene>
    <name evidence="8" type="primary">DYNC1LI2</name>
    <name type="synonym">DNCLI2</name>
    <name type="synonym">LIC2</name>
</gene>
<keyword id="KW-0002">3D-structure</keyword>
<keyword id="KW-0025">Alternative splicing</keyword>
<keyword id="KW-0067">ATP-binding</keyword>
<keyword id="KW-0963">Cytoplasm</keyword>
<keyword id="KW-0206">Cytoskeleton</keyword>
<keyword id="KW-0243">Dynein</keyword>
<keyword id="KW-0488">Methylation</keyword>
<keyword id="KW-0493">Microtubule</keyword>
<keyword id="KW-0505">Motor protein</keyword>
<keyword id="KW-0547">Nucleotide-binding</keyword>
<keyword id="KW-0597">Phosphoprotein</keyword>
<keyword id="KW-1267">Proteomics identification</keyword>
<keyword id="KW-1185">Reference proteome</keyword>
<keyword id="KW-0813">Transport</keyword>